<keyword id="KW-1185">Reference proteome</keyword>
<gene>
    <name type="primary">LBD37</name>
    <name type="synonym">ASL39</name>
    <name type="ordered locus">At5g67420</name>
    <name type="ORF">K8K14.16</name>
</gene>
<protein>
    <recommendedName>
        <fullName>LOB domain-containing protein 37</fullName>
    </recommendedName>
    <alternativeName>
        <fullName>ASYMMETRIC LEAVES 2-like protein 39</fullName>
        <shortName>AS2-like protein 39</shortName>
    </alternativeName>
</protein>
<feature type="chain" id="PRO_0000132287" description="LOB domain-containing protein 37">
    <location>
        <begin position="1"/>
        <end position="250"/>
    </location>
</feature>
<feature type="domain" description="LOB" evidence="1">
    <location>
        <begin position="1"/>
        <end position="107"/>
    </location>
</feature>
<feature type="region of interest" description="Disordered" evidence="2">
    <location>
        <begin position="145"/>
        <end position="227"/>
    </location>
</feature>
<feature type="compositionally biased region" description="Low complexity" evidence="2">
    <location>
        <begin position="157"/>
        <end position="170"/>
    </location>
</feature>
<feature type="sequence conflict" description="In Ref. 5; AAM65544." evidence="4" ref="5">
    <original>A</original>
    <variation>S</variation>
    <location>
        <position position="131"/>
    </location>
</feature>
<reference key="1">
    <citation type="journal article" date="2002" name="Plant Physiol.">
        <title>The LATERAL ORGAN BOUNDARIES gene defines a novel, plant-specific gene family.</title>
        <authorList>
            <person name="Shuai B."/>
            <person name="Reynaga-Pena C.G."/>
            <person name="Springer P.S."/>
        </authorList>
    </citation>
    <scope>NUCLEOTIDE SEQUENCE [MRNA]</scope>
    <scope>TISSUE SPECIFICITY</scope>
    <scope>GENE FAMILY</scope>
    <scope>NOMENCLATURE</scope>
    <source>
        <strain>cv. Columbia</strain>
    </source>
</reference>
<reference key="2">
    <citation type="journal article" date="2009" name="Plant J.">
        <title>Characterization of genes in the ASYMMETRIC LEAVES2/LATERAL ORGAN BOUNDARIES (AS2/LOB) family in Arabidopsis thaliana, and functional and molecular comparisons between AS2 and other family members.</title>
        <authorList>
            <person name="Matsumura Y."/>
            <person name="Iwakawa H."/>
            <person name="Machida Y."/>
            <person name="Machida C."/>
        </authorList>
    </citation>
    <scope>NUCLEOTIDE SEQUENCE [MRNA]</scope>
    <source>
        <strain>cv. Columbia</strain>
    </source>
</reference>
<reference key="3">
    <citation type="journal article" date="1997" name="DNA Res.">
        <title>Structural analysis of Arabidopsis thaliana chromosome 5. III. Sequence features of the regions of 1,191,918 bp covered by seventeen physically assigned P1 clones.</title>
        <authorList>
            <person name="Nakamura Y."/>
            <person name="Sato S."/>
            <person name="Kaneko T."/>
            <person name="Kotani H."/>
            <person name="Asamizu E."/>
            <person name="Miyajima N."/>
            <person name="Tabata S."/>
        </authorList>
    </citation>
    <scope>NUCLEOTIDE SEQUENCE [LARGE SCALE GENOMIC DNA]</scope>
    <source>
        <strain>cv. Columbia</strain>
    </source>
</reference>
<reference key="4">
    <citation type="journal article" date="2017" name="Plant J.">
        <title>Araport11: a complete reannotation of the Arabidopsis thaliana reference genome.</title>
        <authorList>
            <person name="Cheng C.Y."/>
            <person name="Krishnakumar V."/>
            <person name="Chan A.P."/>
            <person name="Thibaud-Nissen F."/>
            <person name="Schobel S."/>
            <person name="Town C.D."/>
        </authorList>
    </citation>
    <scope>GENOME REANNOTATION</scope>
    <source>
        <strain>cv. Columbia</strain>
    </source>
</reference>
<reference key="5">
    <citation type="submission" date="2002-03" db="EMBL/GenBank/DDBJ databases">
        <title>Full-length cDNA from Arabidopsis thaliana.</title>
        <authorList>
            <person name="Brover V.V."/>
            <person name="Troukhan M.E."/>
            <person name="Alexandrov N.A."/>
            <person name="Lu Y.-P."/>
            <person name="Flavell R.B."/>
            <person name="Feldmann K.A."/>
        </authorList>
    </citation>
    <scope>NUCLEOTIDE SEQUENCE [LARGE SCALE MRNA]</scope>
</reference>
<reference key="6">
    <citation type="submission" date="2006-02" db="EMBL/GenBank/DDBJ databases">
        <title>Arabidopsis ORF clones.</title>
        <authorList>
            <person name="Shinn P."/>
            <person name="Chen H."/>
            <person name="Kim C.J."/>
            <person name="Ecker J.R."/>
        </authorList>
    </citation>
    <scope>NUCLEOTIDE SEQUENCE [LARGE SCALE MRNA]</scope>
    <source>
        <strain>cv. Columbia</strain>
    </source>
</reference>
<reference key="7">
    <citation type="journal article" date="2002" name="Plant Cell Physiol.">
        <title>The ASYMMETRIC LEAVES2 gene of Arabidopsis thaliana, required for formation of a symmetric flat leaf lamina, encodes a member of a novel family of proteins characterized by cysteine repeats and a leucine zipper.</title>
        <authorList>
            <person name="Iwakawa H."/>
            <person name="Ueno Y."/>
            <person name="Semiarti E."/>
            <person name="Onouchi H."/>
            <person name="Kojima S."/>
            <person name="Tsukaya H."/>
            <person name="Hasebe M."/>
            <person name="Soma T."/>
            <person name="Ikezaki M."/>
            <person name="Machida C."/>
            <person name="Machida Y."/>
        </authorList>
    </citation>
    <scope>GENE FAMILY</scope>
    <scope>NOMENCLATURE</scope>
</reference>
<name>LBD37_ARATH</name>
<comment type="tissue specificity">
    <text evidence="3">Expressed in young shoots, roots, stems, leaves and flowers.</text>
</comment>
<comment type="similarity">
    <text evidence="4">Belongs to the LOB domain-containing protein family.</text>
</comment>
<accession>Q9FN11</accession>
<accession>B7XG93</accession>
<accession>Q2HIV4</accession>
<accession>Q8LA66</accession>
<dbReference type="EMBL" id="AF447894">
    <property type="protein sequence ID" value="AAL38039.1"/>
    <property type="molecule type" value="mRNA"/>
</dbReference>
<dbReference type="EMBL" id="AB473872">
    <property type="protein sequence ID" value="BAH10583.1"/>
    <property type="molecule type" value="mRNA"/>
</dbReference>
<dbReference type="EMBL" id="AB007645">
    <property type="protein sequence ID" value="BAB09027.1"/>
    <property type="molecule type" value="Genomic_DNA"/>
</dbReference>
<dbReference type="EMBL" id="CP002688">
    <property type="protein sequence ID" value="AED98342.1"/>
    <property type="molecule type" value="Genomic_DNA"/>
</dbReference>
<dbReference type="EMBL" id="CP002688">
    <property type="protein sequence ID" value="ANM69094.1"/>
    <property type="molecule type" value="Genomic_DNA"/>
</dbReference>
<dbReference type="EMBL" id="AY087998">
    <property type="protein sequence ID" value="AAM65544.1"/>
    <property type="molecule type" value="mRNA"/>
</dbReference>
<dbReference type="EMBL" id="BT024477">
    <property type="protein sequence ID" value="ABD19658.1"/>
    <property type="molecule type" value="mRNA"/>
</dbReference>
<dbReference type="RefSeq" id="NP_001318897.1">
    <property type="nucleotide sequence ID" value="NM_001345828.1"/>
</dbReference>
<dbReference type="RefSeq" id="NP_201543.1">
    <property type="nucleotide sequence ID" value="NM_126142.5"/>
</dbReference>
<dbReference type="SMR" id="Q9FN11"/>
<dbReference type="BioGRID" id="22120">
    <property type="interactions" value="6"/>
</dbReference>
<dbReference type="FunCoup" id="Q9FN11">
    <property type="interactions" value="194"/>
</dbReference>
<dbReference type="STRING" id="3702.Q9FN11"/>
<dbReference type="GlyGen" id="Q9FN11">
    <property type="glycosylation" value="1 site"/>
</dbReference>
<dbReference type="PaxDb" id="3702-AT5G67420.1"/>
<dbReference type="ProteomicsDB" id="237080"/>
<dbReference type="EnsemblPlants" id="AT5G67420.1">
    <property type="protein sequence ID" value="AT5G67420.1"/>
    <property type="gene ID" value="AT5G67420"/>
</dbReference>
<dbReference type="EnsemblPlants" id="AT5G67420.2">
    <property type="protein sequence ID" value="AT5G67420.2"/>
    <property type="gene ID" value="AT5G67420"/>
</dbReference>
<dbReference type="GeneID" id="836878"/>
<dbReference type="Gramene" id="AT5G67420.1">
    <property type="protein sequence ID" value="AT5G67420.1"/>
    <property type="gene ID" value="AT5G67420"/>
</dbReference>
<dbReference type="Gramene" id="AT5G67420.2">
    <property type="protein sequence ID" value="AT5G67420.2"/>
    <property type="gene ID" value="AT5G67420"/>
</dbReference>
<dbReference type="KEGG" id="ath:AT5G67420"/>
<dbReference type="Araport" id="AT5G67420"/>
<dbReference type="TAIR" id="AT5G67420">
    <property type="gene designation" value="LBD37"/>
</dbReference>
<dbReference type="eggNOG" id="ENOG502QU8T">
    <property type="taxonomic scope" value="Eukaryota"/>
</dbReference>
<dbReference type="HOGENOM" id="CLU_054665_1_1_1"/>
<dbReference type="InParanoid" id="Q9FN11"/>
<dbReference type="OMA" id="WDNTATG"/>
<dbReference type="OrthoDB" id="1922547at2759"/>
<dbReference type="PhylomeDB" id="Q9FN11"/>
<dbReference type="PRO" id="PR:Q9FN11"/>
<dbReference type="Proteomes" id="UP000006548">
    <property type="component" value="Chromosome 5"/>
</dbReference>
<dbReference type="ExpressionAtlas" id="Q9FN11">
    <property type="expression patterns" value="baseline and differential"/>
</dbReference>
<dbReference type="GO" id="GO:0000976">
    <property type="term" value="F:transcription cis-regulatory region binding"/>
    <property type="evidence" value="ECO:0000353"/>
    <property type="project" value="TAIR"/>
</dbReference>
<dbReference type="GO" id="GO:0060776">
    <property type="term" value="P:simple leaf morphogenesis"/>
    <property type="evidence" value="ECO:0000315"/>
    <property type="project" value="TAIR"/>
</dbReference>
<dbReference type="InterPro" id="IPR004883">
    <property type="entry name" value="LOB"/>
</dbReference>
<dbReference type="PANTHER" id="PTHR31304:SF35">
    <property type="entry name" value="LOB DOMAIN-CONTAINING PROTEIN 37"/>
    <property type="match status" value="1"/>
</dbReference>
<dbReference type="PANTHER" id="PTHR31304">
    <property type="entry name" value="LOB DOMAIN-CONTAINING PROTEIN 38"/>
    <property type="match status" value="1"/>
</dbReference>
<dbReference type="Pfam" id="PF03195">
    <property type="entry name" value="LOB"/>
    <property type="match status" value="1"/>
</dbReference>
<dbReference type="PROSITE" id="PS50891">
    <property type="entry name" value="LOB"/>
    <property type="match status" value="1"/>
</dbReference>
<organism>
    <name type="scientific">Arabidopsis thaliana</name>
    <name type="common">Mouse-ear cress</name>
    <dbReference type="NCBI Taxonomy" id="3702"/>
    <lineage>
        <taxon>Eukaryota</taxon>
        <taxon>Viridiplantae</taxon>
        <taxon>Streptophyta</taxon>
        <taxon>Embryophyta</taxon>
        <taxon>Tracheophyta</taxon>
        <taxon>Spermatophyta</taxon>
        <taxon>Magnoliopsida</taxon>
        <taxon>eudicotyledons</taxon>
        <taxon>Gunneridae</taxon>
        <taxon>Pentapetalae</taxon>
        <taxon>rosids</taxon>
        <taxon>malvids</taxon>
        <taxon>Brassicales</taxon>
        <taxon>Brassicaceae</taxon>
        <taxon>Camelineae</taxon>
        <taxon>Arabidopsis</taxon>
    </lineage>
</organism>
<proteinExistence type="evidence at transcript level"/>
<sequence>MSCNGCRVLRKGCSENCILRPCIQWIETADAQGHATVFVAKFFGRAGLMSFISAVPDSQRPALFQSLLYEACGRTVNPVNGAIGMLWTGNWNICQAAVETVLRGGSLRPIPELLTHGGGFAGFPSPTSEEASEICTEMLNLQQNDSTDRNIYHHSRFSSSRSRSTMDSSSPTKRKRLSSEDQPSSELDLSLIPNFPIKQATPSSTRRRSVTPSMNSEDSGTTTTTTAFCDKGDVYGNGGGETTKLLNLFV</sequence>
<evidence type="ECO:0000255" key="1">
    <source>
        <dbReference type="PROSITE-ProRule" id="PRU00291"/>
    </source>
</evidence>
<evidence type="ECO:0000256" key="2">
    <source>
        <dbReference type="SAM" id="MobiDB-lite"/>
    </source>
</evidence>
<evidence type="ECO:0000269" key="3">
    <source>
    </source>
</evidence>
<evidence type="ECO:0000305" key="4"/>